<keyword id="KW-0066">ATP synthesis</keyword>
<keyword id="KW-0139">CF(1)</keyword>
<keyword id="KW-0375">Hydrogen ion transport</keyword>
<keyword id="KW-0378">Hydrolase</keyword>
<keyword id="KW-0406">Ion transport</keyword>
<keyword id="KW-0472">Membrane</keyword>
<keyword id="KW-0496">Mitochondrion</keyword>
<keyword id="KW-0999">Mitochondrion inner membrane</keyword>
<keyword id="KW-0809">Transit peptide</keyword>
<keyword id="KW-0813">Transport</keyword>
<protein>
    <recommendedName>
        <fullName>ATP synthase subunit delta', mitochondrial</fullName>
    </recommendedName>
    <alternativeName>
        <fullName>F-ATPase delta' subunit</fullName>
    </alternativeName>
</protein>
<accession>Q41000</accession>
<organism>
    <name type="scientific">Pisum sativum</name>
    <name type="common">Garden pea</name>
    <name type="synonym">Lathyrus oleraceus</name>
    <dbReference type="NCBI Taxonomy" id="3888"/>
    <lineage>
        <taxon>Eukaryota</taxon>
        <taxon>Viridiplantae</taxon>
        <taxon>Streptophyta</taxon>
        <taxon>Embryophyta</taxon>
        <taxon>Tracheophyta</taxon>
        <taxon>Spermatophyta</taxon>
        <taxon>Magnoliopsida</taxon>
        <taxon>eudicotyledons</taxon>
        <taxon>Gunneridae</taxon>
        <taxon>Pentapetalae</taxon>
        <taxon>rosids</taxon>
        <taxon>fabids</taxon>
        <taxon>Fabales</taxon>
        <taxon>Fabaceae</taxon>
        <taxon>Papilionoideae</taxon>
        <taxon>50 kb inversion clade</taxon>
        <taxon>NPAAA clade</taxon>
        <taxon>Hologalegina</taxon>
        <taxon>IRL clade</taxon>
        <taxon>Fabeae</taxon>
        <taxon>Pisum</taxon>
    </lineage>
</organism>
<feature type="transit peptide" description="Mitochondrion" evidence="1">
    <location>
        <begin position="1"/>
        <end position="19"/>
    </location>
</feature>
<feature type="chain" id="PRO_0000002659" description="ATP synthase subunit delta', mitochondrial">
    <location>
        <begin position="20"/>
        <end position="197"/>
    </location>
</feature>
<proteinExistence type="inferred from homology"/>
<evidence type="ECO:0000250" key="1"/>
<evidence type="ECO:0000305" key="2"/>
<dbReference type="EMBL" id="L13320">
    <property type="protein sequence ID" value="AAA33646.1"/>
    <property type="molecule type" value="Genomic_DNA"/>
</dbReference>
<dbReference type="PIR" id="T06549">
    <property type="entry name" value="T06549"/>
</dbReference>
<dbReference type="SMR" id="Q41000"/>
<dbReference type="GO" id="GO:0005743">
    <property type="term" value="C:mitochondrial inner membrane"/>
    <property type="evidence" value="ECO:0007669"/>
    <property type="project" value="UniProtKB-SubCell"/>
</dbReference>
<dbReference type="GO" id="GO:0045259">
    <property type="term" value="C:proton-transporting ATP synthase complex"/>
    <property type="evidence" value="ECO:0007669"/>
    <property type="project" value="UniProtKB-KW"/>
</dbReference>
<dbReference type="GO" id="GO:0016787">
    <property type="term" value="F:hydrolase activity"/>
    <property type="evidence" value="ECO:0007669"/>
    <property type="project" value="UniProtKB-KW"/>
</dbReference>
<dbReference type="GO" id="GO:0046933">
    <property type="term" value="F:proton-transporting ATP synthase activity, rotational mechanism"/>
    <property type="evidence" value="ECO:0007669"/>
    <property type="project" value="InterPro"/>
</dbReference>
<dbReference type="CDD" id="cd12152">
    <property type="entry name" value="F1-ATPase_delta"/>
    <property type="match status" value="1"/>
</dbReference>
<dbReference type="Gene3D" id="1.20.5.440">
    <property type="entry name" value="ATP synthase delta/epsilon subunit, C-terminal domain"/>
    <property type="match status" value="1"/>
</dbReference>
<dbReference type="Gene3D" id="2.60.15.10">
    <property type="entry name" value="F0F1 ATP synthase delta/epsilon subunit, N-terminal"/>
    <property type="match status" value="1"/>
</dbReference>
<dbReference type="HAMAP" id="MF_00530">
    <property type="entry name" value="ATP_synth_epsil_bac"/>
    <property type="match status" value="1"/>
</dbReference>
<dbReference type="InterPro" id="IPR001469">
    <property type="entry name" value="ATP_synth_F1_dsu/esu"/>
</dbReference>
<dbReference type="InterPro" id="IPR020546">
    <property type="entry name" value="ATP_synth_F1_dsu/esu_N"/>
</dbReference>
<dbReference type="InterPro" id="IPR036771">
    <property type="entry name" value="ATPsynth_dsu/esu_N"/>
</dbReference>
<dbReference type="PANTHER" id="PTHR13822">
    <property type="entry name" value="ATP SYNTHASE DELTA/EPSILON CHAIN"/>
    <property type="match status" value="1"/>
</dbReference>
<dbReference type="PANTHER" id="PTHR13822:SF22">
    <property type="entry name" value="ATP SYNTHASE SUBUNIT DELTA', MITOCHONDRIAL"/>
    <property type="match status" value="1"/>
</dbReference>
<dbReference type="Pfam" id="PF02823">
    <property type="entry name" value="ATP-synt_DE_N"/>
    <property type="match status" value="1"/>
</dbReference>
<dbReference type="SUPFAM" id="SSF51344">
    <property type="entry name" value="Epsilon subunit of F1F0-ATP synthase N-terminal domain"/>
    <property type="match status" value="1"/>
</dbReference>
<sequence length="197" mass="21274">MFRRATSTFLSRASATRRFSTDVATPATNSSFVEAWRKVSPNIDPPKTPLEFLKTRPPVPSTIPTKLTVNFVLPYSSQLAAKEVDSVIIPATTGEMGVLPGHVATIAELKPGVLTVQEGTDTTKYFVSSGFRFIHANSVADIIAVEAVPVNQLDRDLVQKGLQEFTQKLNSATTDLEKREAQIGIDVDSALNSALTG</sequence>
<name>ATP4_PEA</name>
<comment type="function">
    <text>Mitochondrial membrane ATP synthase (F(1)F(0) ATP synthase or Complex V) produces ATP from ADP in the presence of a proton gradient across the membrane which is generated by electron transport complexes of the respiratory chain. F-type ATPases consist of two structural domains, F(1) - containing the extramembraneous catalytic core, and F(0) - containing the membrane proton channel, linked together by a central stalk and a peripheral stalk. During catalysis, ATP turnover in the catalytic domain of F(1) is coupled via a rotary mechanism of the central stalk subunits to proton translocation. Part of the complex F(1) domain and of the central stalk which is part of the complex rotary element. Rotation of the central stalk against the surrounding alpha(3)beta(3) subunits leads to hydrolysis of ATP in three separate catalytic sites on the beta subunits.</text>
</comment>
<comment type="subunit">
    <text>F-type ATPases have 2 components, CF(1) - the catalytic core - and CF(0) - the membrane proton channel. CF(1) has five subunits: alpha(3), beta(3), gamma(1), delta(1), epsilon(1). CF(0) has three main subunits: a, b and c.</text>
</comment>
<comment type="subcellular location">
    <subcellularLocation>
        <location>Mitochondrion</location>
    </subcellularLocation>
    <subcellularLocation>
        <location>Mitochondrion inner membrane</location>
    </subcellularLocation>
</comment>
<comment type="similarity">
    <text evidence="2">Belongs to the ATPase epsilon chain family.</text>
</comment>
<reference key="1">
    <citation type="submission" date="1993-04" db="EMBL/GenBank/DDBJ databases">
        <authorList>
            <person name="Sulli C."/>
            <person name="Oliver D.J."/>
        </authorList>
    </citation>
    <scope>NUCLEOTIDE SEQUENCE [GENOMIC DNA]</scope>
</reference>